<proteinExistence type="inferred from homology"/>
<reference key="1">
    <citation type="journal article" date="2010" name="PLoS ONE">
        <title>The complete multipartite genome sequence of Cupriavidus necator JMP134, a versatile pollutant degrader.</title>
        <authorList>
            <person name="Lykidis A."/>
            <person name="Perez-Pantoja D."/>
            <person name="Ledger T."/>
            <person name="Mavromatis K."/>
            <person name="Anderson I.J."/>
            <person name="Ivanova N.N."/>
            <person name="Hooper S.D."/>
            <person name="Lapidus A."/>
            <person name="Lucas S."/>
            <person name="Gonzalez B."/>
            <person name="Kyrpides N.C."/>
        </authorList>
    </citation>
    <scope>NUCLEOTIDE SEQUENCE [LARGE SCALE GENOMIC DNA]</scope>
    <source>
        <strain>JMP134 / LMG 1197</strain>
    </source>
</reference>
<accession>Q474Y6</accession>
<gene>
    <name evidence="1" type="primary">cobQ</name>
    <name type="ordered locus">Reut_A0665</name>
</gene>
<dbReference type="EMBL" id="CP000090">
    <property type="protein sequence ID" value="AAZ60047.1"/>
    <property type="molecule type" value="Genomic_DNA"/>
</dbReference>
<dbReference type="SMR" id="Q474Y6"/>
<dbReference type="STRING" id="264198.Reut_A0665"/>
<dbReference type="KEGG" id="reu:Reut_A0665"/>
<dbReference type="eggNOG" id="COG1492">
    <property type="taxonomic scope" value="Bacteria"/>
</dbReference>
<dbReference type="HOGENOM" id="CLU_019250_2_2_4"/>
<dbReference type="OrthoDB" id="9808302at2"/>
<dbReference type="UniPathway" id="UPA00148"/>
<dbReference type="GO" id="GO:0015420">
    <property type="term" value="F:ABC-type vitamin B12 transporter activity"/>
    <property type="evidence" value="ECO:0007669"/>
    <property type="project" value="UniProtKB-UniRule"/>
</dbReference>
<dbReference type="GO" id="GO:0003824">
    <property type="term" value="F:catalytic activity"/>
    <property type="evidence" value="ECO:0007669"/>
    <property type="project" value="InterPro"/>
</dbReference>
<dbReference type="GO" id="GO:0009236">
    <property type="term" value="P:cobalamin biosynthetic process"/>
    <property type="evidence" value="ECO:0007669"/>
    <property type="project" value="UniProtKB-UniRule"/>
</dbReference>
<dbReference type="CDD" id="cd05389">
    <property type="entry name" value="CobQ_N"/>
    <property type="match status" value="1"/>
</dbReference>
<dbReference type="CDD" id="cd01750">
    <property type="entry name" value="GATase1_CobQ"/>
    <property type="match status" value="1"/>
</dbReference>
<dbReference type="Gene3D" id="3.40.50.880">
    <property type="match status" value="1"/>
</dbReference>
<dbReference type="Gene3D" id="3.40.50.300">
    <property type="entry name" value="P-loop containing nucleotide triphosphate hydrolases"/>
    <property type="match status" value="1"/>
</dbReference>
<dbReference type="HAMAP" id="MF_00028">
    <property type="entry name" value="CobQ"/>
    <property type="match status" value="1"/>
</dbReference>
<dbReference type="InterPro" id="IPR029062">
    <property type="entry name" value="Class_I_gatase-like"/>
</dbReference>
<dbReference type="InterPro" id="IPR002586">
    <property type="entry name" value="CobQ/CobB/MinD/ParA_Nub-bd_dom"/>
</dbReference>
<dbReference type="InterPro" id="IPR033949">
    <property type="entry name" value="CobQ_GATase1"/>
</dbReference>
<dbReference type="InterPro" id="IPR047045">
    <property type="entry name" value="CobQ_N"/>
</dbReference>
<dbReference type="InterPro" id="IPR004459">
    <property type="entry name" value="CobQ_synth"/>
</dbReference>
<dbReference type="InterPro" id="IPR011698">
    <property type="entry name" value="GATase_3"/>
</dbReference>
<dbReference type="InterPro" id="IPR027417">
    <property type="entry name" value="P-loop_NTPase"/>
</dbReference>
<dbReference type="NCBIfam" id="TIGR00313">
    <property type="entry name" value="cobQ"/>
    <property type="match status" value="1"/>
</dbReference>
<dbReference type="NCBIfam" id="NF001989">
    <property type="entry name" value="PRK00784.1"/>
    <property type="match status" value="1"/>
</dbReference>
<dbReference type="PANTHER" id="PTHR21343:SF1">
    <property type="entry name" value="COBYRIC ACID SYNTHASE"/>
    <property type="match status" value="1"/>
</dbReference>
<dbReference type="PANTHER" id="PTHR21343">
    <property type="entry name" value="DETHIOBIOTIN SYNTHETASE"/>
    <property type="match status" value="1"/>
</dbReference>
<dbReference type="Pfam" id="PF01656">
    <property type="entry name" value="CbiA"/>
    <property type="match status" value="1"/>
</dbReference>
<dbReference type="Pfam" id="PF07685">
    <property type="entry name" value="GATase_3"/>
    <property type="match status" value="1"/>
</dbReference>
<dbReference type="SUPFAM" id="SSF52317">
    <property type="entry name" value="Class I glutamine amidotransferase-like"/>
    <property type="match status" value="1"/>
</dbReference>
<dbReference type="SUPFAM" id="SSF52540">
    <property type="entry name" value="P-loop containing nucleoside triphosphate hydrolases"/>
    <property type="match status" value="1"/>
</dbReference>
<dbReference type="PROSITE" id="PS51274">
    <property type="entry name" value="GATASE_COBBQ"/>
    <property type="match status" value="1"/>
</dbReference>
<organism>
    <name type="scientific">Cupriavidus pinatubonensis (strain JMP 134 / LMG 1197)</name>
    <name type="common">Cupriavidus necator (strain JMP 134)</name>
    <dbReference type="NCBI Taxonomy" id="264198"/>
    <lineage>
        <taxon>Bacteria</taxon>
        <taxon>Pseudomonadati</taxon>
        <taxon>Pseudomonadota</taxon>
        <taxon>Betaproteobacteria</taxon>
        <taxon>Burkholderiales</taxon>
        <taxon>Burkholderiaceae</taxon>
        <taxon>Cupriavidus</taxon>
    </lineage>
</organism>
<comment type="function">
    <text evidence="1">Catalyzes amidations at positions B, D, E, and G on adenosylcobyrinic A,C-diamide. NH(2) groups are provided by glutamine, and one molecule of ATP is hydrogenolyzed for each amidation.</text>
</comment>
<comment type="pathway">
    <text evidence="1">Cofactor biosynthesis; adenosylcobalamin biosynthesis.</text>
</comment>
<comment type="similarity">
    <text evidence="1">Belongs to the CobB/CobQ family. CobQ subfamily.</text>
</comment>
<protein>
    <recommendedName>
        <fullName evidence="1">Cobyric acid synthase</fullName>
    </recommendedName>
</protein>
<evidence type="ECO:0000255" key="1">
    <source>
        <dbReference type="HAMAP-Rule" id="MF_00028"/>
    </source>
</evidence>
<name>COBQ_CUPPJ</name>
<keyword id="KW-0169">Cobalamin biosynthesis</keyword>
<keyword id="KW-0315">Glutamine amidotransferase</keyword>
<feature type="chain" id="PRO_0000332378" description="Cobyric acid synthase">
    <location>
        <begin position="1"/>
        <end position="488"/>
    </location>
</feature>
<feature type="domain" description="GATase cobBQ-type" evidence="1">
    <location>
        <begin position="247"/>
        <end position="440"/>
    </location>
</feature>
<feature type="active site" description="Nucleophile" evidence="1">
    <location>
        <position position="328"/>
    </location>
</feature>
<feature type="active site" evidence="1">
    <location>
        <position position="432"/>
    </location>
</feature>
<sequence length="488" mass="52129">MVQGTTSDAGKSTVVAGLCRVLARAGMRVAPFKPQNMALNSAVTADGGEIGRAQALQAQAARVEPHTDMNPVLLKPSSDTGAQIIIHGKARLDLDARAYHAYKPEAMKAVLASHERLTQAYDVVVVEGAGSPAEINLRDRDIANMGFAERVDCPVVLVADIDRGGVFAHLVGTLDCLSDSERARVTGFIINRFRGDISLLQPGLDWLEARTGKPVFGVLPYLHGLHLDAEDAIVGAQSAKRGTPDALLRVIVPVLPRISNHTDFDALRAHPQVDLRFIGPGMPVPPADLVILPGSKSVRADLDFLRANGWEPALRRHLRYGGKVIGICGGMQMLGRQIHDPAGHEGPAGSSAGFGWLDYETTLAPHKQLRRVSGRLADADREAAVSGYEIHMGVSTGSGLERPALWLDDENGTRRADGACSEDGQVLATYVHGVFDEPTACEGLLRWAGLDGAQGIDLAALREASIERLADTLASHLDLGAMFAPLRR</sequence>